<name>SOD6_CANAL</name>
<feature type="signal peptide" evidence="2">
    <location>
        <begin position="1"/>
        <end position="18"/>
    </location>
</feature>
<feature type="chain" id="PRO_0000424638" description="Cell surface superoxide dismutase [Cu-Zn] 6">
    <location>
        <begin position="19"/>
        <end position="288"/>
    </location>
</feature>
<feature type="propeptide" id="PRO_0000424639" description="Removed in mature form" evidence="2">
    <location>
        <begin position="289"/>
        <end position="316"/>
    </location>
</feature>
<feature type="region of interest" description="Disordered" evidence="3">
    <location>
        <begin position="243"/>
        <end position="263"/>
    </location>
</feature>
<feature type="compositionally biased region" description="Basic and acidic residues" evidence="3">
    <location>
        <begin position="249"/>
        <end position="258"/>
    </location>
</feature>
<feature type="binding site" evidence="1">
    <location>
        <position position="78"/>
    </location>
    <ligand>
        <name>Cu cation</name>
        <dbReference type="ChEBI" id="CHEBI:23378"/>
        <note>catalytic</note>
    </ligand>
</feature>
<feature type="binding site" evidence="1">
    <location>
        <position position="80"/>
    </location>
    <ligand>
        <name>Cu cation</name>
        <dbReference type="ChEBI" id="CHEBI:23378"/>
        <note>catalytic</note>
    </ligand>
</feature>
<feature type="binding site" evidence="1">
    <location>
        <position position="96"/>
    </location>
    <ligand>
        <name>Cu cation</name>
        <dbReference type="ChEBI" id="CHEBI:23378"/>
        <note>catalytic</note>
    </ligand>
</feature>
<feature type="binding site" evidence="1">
    <location>
        <position position="96"/>
    </location>
    <ligand>
        <name>Zn(2+)</name>
        <dbReference type="ChEBI" id="CHEBI:29105"/>
        <note>structural</note>
    </ligand>
</feature>
<feature type="binding site" evidence="1">
    <location>
        <position position="119"/>
    </location>
    <ligand>
        <name>Zn(2+)</name>
        <dbReference type="ChEBI" id="CHEBI:29105"/>
        <note>structural</note>
    </ligand>
</feature>
<feature type="binding site" evidence="1">
    <location>
        <position position="159"/>
    </location>
    <ligand>
        <name>Cu cation</name>
        <dbReference type="ChEBI" id="CHEBI:23378"/>
        <note>catalytic</note>
    </ligand>
</feature>
<feature type="lipid moiety-binding region" description="GPI-anchor amidated serine" evidence="2">
    <location>
        <position position="288"/>
    </location>
</feature>
<feature type="glycosylation site" description="N-linked (GlcNAc...) asparagine" evidence="2">
    <location>
        <position position="128"/>
    </location>
</feature>
<feature type="glycosylation site" description="N-linked (GlcNAc...) asparagine" evidence="2">
    <location>
        <position position="162"/>
    </location>
</feature>
<feature type="glycosylation site" description="N-linked (GlcNAc...) asparagine" evidence="2">
    <location>
        <position position="240"/>
    </location>
</feature>
<feature type="glycosylation site" description="N-linked (GlcNAc...) asparagine" evidence="2">
    <location>
        <position position="278"/>
    </location>
</feature>
<feature type="glycosylation site" description="N-linked (GlcNAc...) asparagine" evidence="2">
    <location>
        <position position="281"/>
    </location>
</feature>
<proteinExistence type="evidence at protein level"/>
<accession>Q5ACV9</accession>
<accession>A0A1D8PG15</accession>
<evidence type="ECO:0000250" key="1"/>
<evidence type="ECO:0000255" key="2"/>
<evidence type="ECO:0000256" key="3">
    <source>
        <dbReference type="SAM" id="MobiDB-lite"/>
    </source>
</evidence>
<evidence type="ECO:0000269" key="4">
    <source>
    </source>
</evidence>
<evidence type="ECO:0000269" key="5">
    <source>
    </source>
</evidence>
<evidence type="ECO:0000269" key="6">
    <source>
    </source>
</evidence>
<evidence type="ECO:0000305" key="7"/>
<gene>
    <name type="primary">SOD6</name>
    <name type="synonym">PGA9</name>
    <name type="synonym">SOD33</name>
    <name type="ordered locus">CAALFM_C200240CA</name>
    <name type="ORF">CaO19.2108</name>
    <name type="ORF">CaO19.9656</name>
</gene>
<comment type="function">
    <text>Superoxide dismutases serve to convert damaging superoxide radicals, a key form of ROS, to less damaging hydrogen peroxide that can be converted into water by catalase action. May be involved protection against extracellular stress.</text>
</comment>
<comment type="catalytic activity">
    <reaction>
        <text>2 superoxide + 2 H(+) = H2O2 + O2</text>
        <dbReference type="Rhea" id="RHEA:20696"/>
        <dbReference type="ChEBI" id="CHEBI:15378"/>
        <dbReference type="ChEBI" id="CHEBI:15379"/>
        <dbReference type="ChEBI" id="CHEBI:16240"/>
        <dbReference type="ChEBI" id="CHEBI:18421"/>
        <dbReference type="EC" id="1.15.1.1"/>
    </reaction>
</comment>
<comment type="cofactor">
    <cofactor evidence="1">
        <name>Cu cation</name>
        <dbReference type="ChEBI" id="CHEBI:23378"/>
    </cofactor>
    <text evidence="1">Binds 1 copper ion per subunit.</text>
</comment>
<comment type="cofactor">
    <cofactor evidence="1">
        <name>Zn(2+)</name>
        <dbReference type="ChEBI" id="CHEBI:29105"/>
    </cofactor>
    <text evidence="1">Binds 1 zinc ion per subunit.</text>
</comment>
<comment type="subcellular location">
    <subcellularLocation>
        <location>Secreted</location>
        <location>Cell wall</location>
    </subcellularLocation>
    <subcellularLocation>
        <location evidence="1">Membrane</location>
        <topology evidence="1">Lipid-anchor</topology>
        <topology evidence="1">GPI-anchor</topology>
    </subcellularLocation>
    <text evidence="1">Covalently-linked GPI-modified cell wall protein (GPI-CWP).</text>
</comment>
<comment type="induction">
    <text evidence="4 5 6">Unlike SOD4 and SOD5, SOD6 is not regulated during yeast to hyphae transition or by temperature. Up-regulated during biofilm formation and expression is controlled by HAP43.</text>
</comment>
<comment type="PTM">
    <text evidence="1">The GPI-anchor is attached to the protein in the endoplasmic reticulum and serves to target the protein to the cell surface. There, the glucosamine-inositol phospholipid moiety is cleaved off and the GPI-modified mannoprotein is covalently attached via its lipidless GPI glycan remnant to the 1,6-beta-glucan of the outer cell wall layer (By similarity).</text>
</comment>
<comment type="similarity">
    <text evidence="7">Belongs to the Cu-Zn superoxide dismutase family.</text>
</comment>
<sequence>MIFIPIIILIYLVSIAASDKSPKIKKNPRNVVAVADFPFGGDTQVKGNVVFSAKEGKHVNVHIDMTGLPKDEGPFFYHIHERSVPGNGNCEAVGLHFNPYNASPVCDEQKNDAYCQVGDLSGKHGCINTTCFELKYSDPYLSLNRKSKSYIIGKSVVFHYPNLTKIACADIEEANELRLQSLIDEYTQTDDAIQLKELNTPLETDYKFDEVEALSSEIYHSDTDSDPPQQELISTEKLYNKTDNVYSPEETRPSDQNKKSHRHSLLPLAKWKKNSPKNYSNISIHGISSDCLNDGMMVTGSVFGSLVLGIAAGIFV</sequence>
<dbReference type="EC" id="1.15.1.1"/>
<dbReference type="EMBL" id="CP017624">
    <property type="protein sequence ID" value="AOW27078.1"/>
    <property type="molecule type" value="Genomic_DNA"/>
</dbReference>
<dbReference type="RefSeq" id="XP_719554.2">
    <property type="nucleotide sequence ID" value="XM_714461.2"/>
</dbReference>
<dbReference type="SMR" id="Q5ACV9"/>
<dbReference type="STRING" id="237561.Q5ACV9"/>
<dbReference type="GlyCosmos" id="Q5ACV9">
    <property type="glycosylation" value="5 sites, No reported glycans"/>
</dbReference>
<dbReference type="EnsemblFungi" id="C2_00240C_A-T">
    <property type="protein sequence ID" value="C2_00240C_A-T-p1"/>
    <property type="gene ID" value="C2_00240C_A"/>
</dbReference>
<dbReference type="GeneID" id="3638899"/>
<dbReference type="KEGG" id="cal:CAALFM_C200240CA"/>
<dbReference type="CGD" id="CAL0000199539">
    <property type="gene designation" value="SOD6"/>
</dbReference>
<dbReference type="VEuPathDB" id="FungiDB:C2_00240C_A"/>
<dbReference type="eggNOG" id="ENOG502S5NX">
    <property type="taxonomic scope" value="Eukaryota"/>
</dbReference>
<dbReference type="HOGENOM" id="CLU_063073_2_0_1"/>
<dbReference type="InParanoid" id="Q5ACV9"/>
<dbReference type="OMA" id="TKIACAD"/>
<dbReference type="OrthoDB" id="159229at2759"/>
<dbReference type="PRO" id="PR:Q5ACV9"/>
<dbReference type="Proteomes" id="UP000000559">
    <property type="component" value="Chromosome 2"/>
</dbReference>
<dbReference type="GO" id="GO:0005576">
    <property type="term" value="C:extracellular region"/>
    <property type="evidence" value="ECO:0000318"/>
    <property type="project" value="GO_Central"/>
</dbReference>
<dbReference type="GO" id="GO:1903561">
    <property type="term" value="C:extracellular vesicle"/>
    <property type="evidence" value="ECO:0000314"/>
    <property type="project" value="CGD"/>
</dbReference>
<dbReference type="GO" id="GO:0098552">
    <property type="term" value="C:side of membrane"/>
    <property type="evidence" value="ECO:0007669"/>
    <property type="project" value="UniProtKB-KW"/>
</dbReference>
<dbReference type="GO" id="GO:0005507">
    <property type="term" value="F:copper ion binding"/>
    <property type="evidence" value="ECO:0000250"/>
    <property type="project" value="CGD"/>
</dbReference>
<dbReference type="GO" id="GO:0004784">
    <property type="term" value="F:superoxide dismutase activity"/>
    <property type="evidence" value="ECO:0000250"/>
    <property type="project" value="CGD"/>
</dbReference>
<dbReference type="GO" id="GO:0019430">
    <property type="term" value="P:removal of superoxide radicals"/>
    <property type="evidence" value="ECO:0000318"/>
    <property type="project" value="GO_Central"/>
</dbReference>
<dbReference type="FunFam" id="2.60.40.200:FF:000007">
    <property type="entry name" value="Cell surface Cu-only superoxide dismutase 5"/>
    <property type="match status" value="1"/>
</dbReference>
<dbReference type="Gene3D" id="2.60.40.200">
    <property type="entry name" value="Superoxide dismutase, copper/zinc binding domain"/>
    <property type="match status" value="1"/>
</dbReference>
<dbReference type="InterPro" id="IPR036423">
    <property type="entry name" value="SOD-like_Cu/Zn_dom_sf"/>
</dbReference>
<dbReference type="InterPro" id="IPR024134">
    <property type="entry name" value="SOD_Cu/Zn_/chaperone"/>
</dbReference>
<dbReference type="InterPro" id="IPR001424">
    <property type="entry name" value="SOD_Cu_Zn_dom"/>
</dbReference>
<dbReference type="PANTHER" id="PTHR10003">
    <property type="entry name" value="SUPEROXIDE DISMUTASE CU-ZN -RELATED"/>
    <property type="match status" value="1"/>
</dbReference>
<dbReference type="Pfam" id="PF00080">
    <property type="entry name" value="Sod_Cu"/>
    <property type="match status" value="1"/>
</dbReference>
<dbReference type="SUPFAM" id="SSF49329">
    <property type="entry name" value="Cu,Zn superoxide dismutase-like"/>
    <property type="match status" value="1"/>
</dbReference>
<organism>
    <name type="scientific">Candida albicans (strain SC5314 / ATCC MYA-2876)</name>
    <name type="common">Yeast</name>
    <dbReference type="NCBI Taxonomy" id="237561"/>
    <lineage>
        <taxon>Eukaryota</taxon>
        <taxon>Fungi</taxon>
        <taxon>Dikarya</taxon>
        <taxon>Ascomycota</taxon>
        <taxon>Saccharomycotina</taxon>
        <taxon>Pichiomycetes</taxon>
        <taxon>Debaryomycetaceae</taxon>
        <taxon>Candida/Lodderomyces clade</taxon>
        <taxon>Candida</taxon>
    </lineage>
</organism>
<protein>
    <recommendedName>
        <fullName>Cell surface superoxide dismutase [Cu-Zn] 6</fullName>
        <ecNumber>1.15.1.1</ecNumber>
    </recommendedName>
    <alternativeName>
        <fullName>Predicted GPI-anchored protein 9</fullName>
    </alternativeName>
</protein>
<keyword id="KW-0049">Antioxidant</keyword>
<keyword id="KW-0134">Cell wall</keyword>
<keyword id="KW-0186">Copper</keyword>
<keyword id="KW-0325">Glycoprotein</keyword>
<keyword id="KW-0336">GPI-anchor</keyword>
<keyword id="KW-0449">Lipoprotein</keyword>
<keyword id="KW-0472">Membrane</keyword>
<keyword id="KW-0479">Metal-binding</keyword>
<keyword id="KW-0560">Oxidoreductase</keyword>
<keyword id="KW-1185">Reference proteome</keyword>
<keyword id="KW-0964">Secreted</keyword>
<keyword id="KW-0732">Signal</keyword>
<keyword id="KW-0843">Virulence</keyword>
<keyword id="KW-0862">Zinc</keyword>
<reference key="1">
    <citation type="journal article" date="2004" name="Proc. Natl. Acad. Sci. U.S.A.">
        <title>The diploid genome sequence of Candida albicans.</title>
        <authorList>
            <person name="Jones T."/>
            <person name="Federspiel N.A."/>
            <person name="Chibana H."/>
            <person name="Dungan J."/>
            <person name="Kalman S."/>
            <person name="Magee B.B."/>
            <person name="Newport G."/>
            <person name="Thorstenson Y.R."/>
            <person name="Agabian N."/>
            <person name="Magee P.T."/>
            <person name="Davis R.W."/>
            <person name="Scherer S."/>
        </authorList>
    </citation>
    <scope>NUCLEOTIDE SEQUENCE [LARGE SCALE GENOMIC DNA]</scope>
    <source>
        <strain>SC5314 / ATCC MYA-2876</strain>
    </source>
</reference>
<reference key="2">
    <citation type="journal article" date="2007" name="Genome Biol.">
        <title>Assembly of the Candida albicans genome into sixteen supercontigs aligned on the eight chromosomes.</title>
        <authorList>
            <person name="van het Hoog M."/>
            <person name="Rast T.J."/>
            <person name="Martchenko M."/>
            <person name="Grindle S."/>
            <person name="Dignard D."/>
            <person name="Hogues H."/>
            <person name="Cuomo C."/>
            <person name="Berriman M."/>
            <person name="Scherer S."/>
            <person name="Magee B.B."/>
            <person name="Whiteway M."/>
            <person name="Chibana H."/>
            <person name="Nantel A."/>
            <person name="Magee P.T."/>
        </authorList>
    </citation>
    <scope>GENOME REANNOTATION</scope>
    <source>
        <strain>SC5314 / ATCC MYA-2876</strain>
    </source>
</reference>
<reference key="3">
    <citation type="journal article" date="2013" name="Genome Biol.">
        <title>Assembly of a phased diploid Candida albicans genome facilitates allele-specific measurements and provides a simple model for repeat and indel structure.</title>
        <authorList>
            <person name="Muzzey D."/>
            <person name="Schwartz K."/>
            <person name="Weissman J.S."/>
            <person name="Sherlock G."/>
        </authorList>
    </citation>
    <scope>NUCLEOTIDE SEQUENCE [LARGE SCALE GENOMIC DNA]</scope>
    <scope>GENOME REANNOTATION</scope>
    <source>
        <strain>SC5314 / ATCC MYA-2876</strain>
    </source>
</reference>
<reference key="4">
    <citation type="journal article" date="2003" name="Yeast">
        <title>Genome-wide identification of fungal GPI proteins.</title>
        <authorList>
            <person name="De Groot P.W."/>
            <person name="Hellingwerf K.J."/>
            <person name="Klis F.M."/>
        </authorList>
    </citation>
    <scope>PREDICTION OF GPI-ANCHOR</scope>
</reference>
<reference key="5">
    <citation type="journal article" date="2004" name="Mol. Biol. Cell">
        <title>Superoxide dismutases in Candida albicans: transcriptional regulation and functional characterization of the hyphal-induced SOD5 gene.</title>
        <authorList>
            <person name="Martchenko M."/>
            <person name="Alarco A.M."/>
            <person name="Harcus D."/>
            <person name="Whiteway M."/>
        </authorList>
    </citation>
    <scope>IDENTIFICATION</scope>
</reference>
<reference key="6">
    <citation type="journal article" date="2005" name="Eukaryot. Cell">
        <title>Genome-wide transcription profiling of the early phase of biofilm formation by Candida albicans.</title>
        <authorList>
            <person name="Murillo L.A."/>
            <person name="Newport G."/>
            <person name="Lan C.Y."/>
            <person name="Habelitz S."/>
            <person name="Dungan J."/>
            <person name="Agabian N.M."/>
        </authorList>
    </citation>
    <scope>INDUCTION</scope>
</reference>
<reference key="7">
    <citation type="journal article" date="2009" name="Mol. Microbiol.">
        <title>Candida albicans cell surface superoxide dismutases degrade host-derived reactive oxygen species to escape innate immune surveillance.</title>
        <authorList>
            <person name="Frohner I.E."/>
            <person name="Bourgeois C."/>
            <person name="Yatsyk K."/>
            <person name="Majer O."/>
            <person name="Kuchler K."/>
        </authorList>
    </citation>
    <scope>INDUCTION</scope>
</reference>
<reference key="8">
    <citation type="journal article" date="2011" name="J. Biol. Chem.">
        <title>Cap2-HAP complex is a critical transcriptional regulator that has dual but contrasting roles in regulation of iron homeostasis in Candida albicans.</title>
        <authorList>
            <person name="Singh R.P."/>
            <person name="Prasad H.K."/>
            <person name="Sinha I."/>
            <person name="Agarwal N."/>
            <person name="Natarajan K."/>
        </authorList>
    </citation>
    <scope>INDUCTION</scope>
</reference>